<accession>Q89J74</accession>
<proteinExistence type="inferred from homology"/>
<protein>
    <recommendedName>
        <fullName evidence="1">DNA-directed RNA polymerase subunit beta</fullName>
        <shortName evidence="1">RNAP subunit beta</shortName>
        <ecNumber evidence="1">2.7.7.6</ecNumber>
    </recommendedName>
    <alternativeName>
        <fullName evidence="1">RNA polymerase subunit beta</fullName>
    </alternativeName>
    <alternativeName>
        <fullName evidence="1">Transcriptase subunit beta</fullName>
    </alternativeName>
</protein>
<feature type="chain" id="PRO_0000047869" description="DNA-directed RNA polymerase subunit beta">
    <location>
        <begin position="1"/>
        <end position="1372"/>
    </location>
</feature>
<comment type="function">
    <text evidence="1">DNA-dependent RNA polymerase catalyzes the transcription of DNA into RNA using the four ribonucleoside triphosphates as substrates.</text>
</comment>
<comment type="catalytic activity">
    <reaction evidence="1">
        <text>RNA(n) + a ribonucleoside 5'-triphosphate = RNA(n+1) + diphosphate</text>
        <dbReference type="Rhea" id="RHEA:21248"/>
        <dbReference type="Rhea" id="RHEA-COMP:14527"/>
        <dbReference type="Rhea" id="RHEA-COMP:17342"/>
        <dbReference type="ChEBI" id="CHEBI:33019"/>
        <dbReference type="ChEBI" id="CHEBI:61557"/>
        <dbReference type="ChEBI" id="CHEBI:140395"/>
        <dbReference type="EC" id="2.7.7.6"/>
    </reaction>
</comment>
<comment type="subunit">
    <text evidence="1">The RNAP catalytic core consists of 2 alpha, 1 beta, 1 beta' and 1 omega subunit. When a sigma factor is associated with the core the holoenzyme is formed, which can initiate transcription.</text>
</comment>
<comment type="similarity">
    <text evidence="1">Belongs to the RNA polymerase beta chain family.</text>
</comment>
<evidence type="ECO:0000255" key="1">
    <source>
        <dbReference type="HAMAP-Rule" id="MF_01321"/>
    </source>
</evidence>
<keyword id="KW-0240">DNA-directed RNA polymerase</keyword>
<keyword id="KW-0548">Nucleotidyltransferase</keyword>
<keyword id="KW-1185">Reference proteome</keyword>
<keyword id="KW-0804">Transcription</keyword>
<keyword id="KW-0808">Transferase</keyword>
<reference key="1">
    <citation type="journal article" date="2002" name="DNA Res.">
        <title>Complete genomic sequence of nitrogen-fixing symbiotic bacterium Bradyrhizobium japonicum USDA110.</title>
        <authorList>
            <person name="Kaneko T."/>
            <person name="Nakamura Y."/>
            <person name="Sato S."/>
            <person name="Minamisawa K."/>
            <person name="Uchiumi T."/>
            <person name="Sasamoto S."/>
            <person name="Watanabe A."/>
            <person name="Idesawa K."/>
            <person name="Iriguchi M."/>
            <person name="Kawashima K."/>
            <person name="Kohara M."/>
            <person name="Matsumoto M."/>
            <person name="Shimpo S."/>
            <person name="Tsuruoka H."/>
            <person name="Wada T."/>
            <person name="Yamada M."/>
            <person name="Tabata S."/>
        </authorList>
    </citation>
    <scope>NUCLEOTIDE SEQUENCE [LARGE SCALE GENOMIC DNA]</scope>
    <source>
        <strain>JCM 10833 / BCRC 13528 / IAM 13628 / NBRC 14792 / USDA 110</strain>
    </source>
</reference>
<dbReference type="EC" id="2.7.7.6" evidence="1"/>
<dbReference type="EMBL" id="BA000040">
    <property type="protein sequence ID" value="BAC50675.1"/>
    <property type="molecule type" value="Genomic_DNA"/>
</dbReference>
<dbReference type="RefSeq" id="NP_772050.1">
    <property type="nucleotide sequence ID" value="NC_004463.1"/>
</dbReference>
<dbReference type="RefSeq" id="WP_011088159.1">
    <property type="nucleotide sequence ID" value="NZ_CP011360.1"/>
</dbReference>
<dbReference type="SMR" id="Q89J74"/>
<dbReference type="FunCoup" id="Q89J74">
    <property type="interactions" value="695"/>
</dbReference>
<dbReference type="STRING" id="224911.AAV28_24460"/>
<dbReference type="EnsemblBacteria" id="BAC50675">
    <property type="protein sequence ID" value="BAC50675"/>
    <property type="gene ID" value="BAC50675"/>
</dbReference>
<dbReference type="GeneID" id="46492408"/>
<dbReference type="KEGG" id="bja:bll5410"/>
<dbReference type="PATRIC" id="fig|224911.44.peg.5310"/>
<dbReference type="eggNOG" id="COG0085">
    <property type="taxonomic scope" value="Bacteria"/>
</dbReference>
<dbReference type="HOGENOM" id="CLU_000524_4_0_5"/>
<dbReference type="InParanoid" id="Q89J74"/>
<dbReference type="OrthoDB" id="9803954at2"/>
<dbReference type="PhylomeDB" id="Q89J74"/>
<dbReference type="Proteomes" id="UP000002526">
    <property type="component" value="Chromosome"/>
</dbReference>
<dbReference type="GO" id="GO:0000428">
    <property type="term" value="C:DNA-directed RNA polymerase complex"/>
    <property type="evidence" value="ECO:0007669"/>
    <property type="project" value="UniProtKB-KW"/>
</dbReference>
<dbReference type="GO" id="GO:0003677">
    <property type="term" value="F:DNA binding"/>
    <property type="evidence" value="ECO:0007669"/>
    <property type="project" value="UniProtKB-UniRule"/>
</dbReference>
<dbReference type="GO" id="GO:0003899">
    <property type="term" value="F:DNA-directed RNA polymerase activity"/>
    <property type="evidence" value="ECO:0007669"/>
    <property type="project" value="UniProtKB-UniRule"/>
</dbReference>
<dbReference type="GO" id="GO:0032549">
    <property type="term" value="F:ribonucleoside binding"/>
    <property type="evidence" value="ECO:0007669"/>
    <property type="project" value="InterPro"/>
</dbReference>
<dbReference type="GO" id="GO:0006351">
    <property type="term" value="P:DNA-templated transcription"/>
    <property type="evidence" value="ECO:0007669"/>
    <property type="project" value="UniProtKB-UniRule"/>
</dbReference>
<dbReference type="CDD" id="cd00653">
    <property type="entry name" value="RNA_pol_B_RPB2"/>
    <property type="match status" value="1"/>
</dbReference>
<dbReference type="FunFam" id="2.40.50.100:FF:000006">
    <property type="entry name" value="DNA-directed RNA polymerase subunit beta"/>
    <property type="match status" value="1"/>
</dbReference>
<dbReference type="FunFam" id="3.90.1800.10:FF:000001">
    <property type="entry name" value="DNA-directed RNA polymerase subunit beta"/>
    <property type="match status" value="1"/>
</dbReference>
<dbReference type="Gene3D" id="2.40.50.100">
    <property type="match status" value="1"/>
</dbReference>
<dbReference type="Gene3D" id="2.40.50.150">
    <property type="match status" value="1"/>
</dbReference>
<dbReference type="Gene3D" id="3.90.1100.10">
    <property type="match status" value="2"/>
</dbReference>
<dbReference type="Gene3D" id="2.30.150.10">
    <property type="entry name" value="DNA-directed RNA polymerase, beta subunit, external 1 domain"/>
    <property type="match status" value="1"/>
</dbReference>
<dbReference type="Gene3D" id="2.40.270.10">
    <property type="entry name" value="DNA-directed RNA polymerase, subunit 2, domain 6"/>
    <property type="match status" value="1"/>
</dbReference>
<dbReference type="Gene3D" id="3.90.1800.10">
    <property type="entry name" value="RNA polymerase alpha subunit dimerisation domain"/>
    <property type="match status" value="1"/>
</dbReference>
<dbReference type="Gene3D" id="3.90.1110.10">
    <property type="entry name" value="RNA polymerase Rpb2, domain 2"/>
    <property type="match status" value="1"/>
</dbReference>
<dbReference type="HAMAP" id="MF_01321">
    <property type="entry name" value="RNApol_bact_RpoB"/>
    <property type="match status" value="1"/>
</dbReference>
<dbReference type="InterPro" id="IPR042107">
    <property type="entry name" value="DNA-dir_RNA_pol_bsu_ext_1_sf"/>
</dbReference>
<dbReference type="InterPro" id="IPR019462">
    <property type="entry name" value="DNA-dir_RNA_pol_bsu_external_1"/>
</dbReference>
<dbReference type="InterPro" id="IPR015712">
    <property type="entry name" value="DNA-dir_RNA_pol_su2"/>
</dbReference>
<dbReference type="InterPro" id="IPR007120">
    <property type="entry name" value="DNA-dir_RNAP_su2_dom"/>
</dbReference>
<dbReference type="InterPro" id="IPR037033">
    <property type="entry name" value="DNA-dir_RNAP_su2_hyb_sf"/>
</dbReference>
<dbReference type="InterPro" id="IPR010243">
    <property type="entry name" value="RNA_pol_bsu_bac"/>
</dbReference>
<dbReference type="InterPro" id="IPR007121">
    <property type="entry name" value="RNA_pol_bsu_CS"/>
</dbReference>
<dbReference type="InterPro" id="IPR007644">
    <property type="entry name" value="RNA_pol_bsu_protrusion"/>
</dbReference>
<dbReference type="InterPro" id="IPR007642">
    <property type="entry name" value="RNA_pol_Rpb2_2"/>
</dbReference>
<dbReference type="InterPro" id="IPR037034">
    <property type="entry name" value="RNA_pol_Rpb2_2_sf"/>
</dbReference>
<dbReference type="InterPro" id="IPR007645">
    <property type="entry name" value="RNA_pol_Rpb2_3"/>
</dbReference>
<dbReference type="InterPro" id="IPR007641">
    <property type="entry name" value="RNA_pol_Rpb2_7"/>
</dbReference>
<dbReference type="InterPro" id="IPR014724">
    <property type="entry name" value="RNA_pol_RPB2_OB-fold"/>
</dbReference>
<dbReference type="NCBIfam" id="NF001616">
    <property type="entry name" value="PRK00405.1"/>
    <property type="match status" value="1"/>
</dbReference>
<dbReference type="NCBIfam" id="TIGR02013">
    <property type="entry name" value="rpoB"/>
    <property type="match status" value="1"/>
</dbReference>
<dbReference type="PANTHER" id="PTHR20856">
    <property type="entry name" value="DNA-DIRECTED RNA POLYMERASE I SUBUNIT 2"/>
    <property type="match status" value="1"/>
</dbReference>
<dbReference type="Pfam" id="PF04563">
    <property type="entry name" value="RNA_pol_Rpb2_1"/>
    <property type="match status" value="1"/>
</dbReference>
<dbReference type="Pfam" id="PF04561">
    <property type="entry name" value="RNA_pol_Rpb2_2"/>
    <property type="match status" value="2"/>
</dbReference>
<dbReference type="Pfam" id="PF04565">
    <property type="entry name" value="RNA_pol_Rpb2_3"/>
    <property type="match status" value="1"/>
</dbReference>
<dbReference type="Pfam" id="PF10385">
    <property type="entry name" value="RNA_pol_Rpb2_45"/>
    <property type="match status" value="1"/>
</dbReference>
<dbReference type="Pfam" id="PF00562">
    <property type="entry name" value="RNA_pol_Rpb2_6"/>
    <property type="match status" value="1"/>
</dbReference>
<dbReference type="Pfam" id="PF04560">
    <property type="entry name" value="RNA_pol_Rpb2_7"/>
    <property type="match status" value="1"/>
</dbReference>
<dbReference type="SUPFAM" id="SSF64484">
    <property type="entry name" value="beta and beta-prime subunits of DNA dependent RNA-polymerase"/>
    <property type="match status" value="1"/>
</dbReference>
<dbReference type="PROSITE" id="PS01166">
    <property type="entry name" value="RNA_POL_BETA"/>
    <property type="match status" value="1"/>
</dbReference>
<sequence>MAQQTFTGRKRVRKFFGHIKEVAEMPNLIEVQKASYDQFLMVDEPQGGRLDEGLQAVFRSVFPISDFSGTSMLEFVRYEFEQPKYDVDECRQRGMTFAAPLKVTLRLIVFDIDEETGAKSVKDIKEQDVYMGDIPLMTMNGTFIVNGTERVIVSQMHRSPGVFFDHDKGKTHSSGKLLFAARVIPYRGSWLDIEFDAKDIVYARIDRRRKIPVTSLMFALGLDGEAILSTFYKKILYKRTKEGWRVPFDANRFRGYSTINDLIDADTGKVVLEAGKKLTVRAARQLQEKGLKALRLSDEELVGNYLAEDLVNPKTGEIHAEAGEEITDKNMKALNEQGYKELPLLDIDHVNVGAYIRNTLSADKNMTREDALFDIYRVMRPGEPPTLDSAQAMFQSLFFDAERYDLSAVGRVKMNMRLDLDAPDTQRTLRKEDILSVIKTLVDLRDGKGEIDDIDHLGNRRVRSVGELMENQYRIGLLRMERAIKERMSSVDIDTVMPQDLINAKPAAAAVREFFGSSQLSQFMDQTNPLSEITHKRRLSALGPGGLTRERAGFEVRDVHPTHYGRICPIETPEGPNIGLINSLATFARVNKYGFVETPYRKVKDGRVTDEVVYLSAMEEGRYTVAQANVPLDPKGRFTEDLVVCRHAGEVLPVTPDKVDYMDVSPKQLVSVAAALIPFLENDDANRALMGSNMQRQAVPLVRAEAPFVGTGMEGVVARDSGAAIAARRSGVIDQIDATRVVIRATEDLDPTKSGVDIYRLMKYQRSNQSTCINQRPLVKVGDIVKKGDIIADGPSTDLGELALGRNVLVAFMPWNGYNFEDSILLSERIVKEDVFTSIHIEEFEVMARDTKLGPEEITRDIPNVSEEALKNLDEAGIVYIGAEVRAGDILVGKITPKGESPMTPEEKLLRAIFGEKASDVRDTSLRVPPGVQGTIVEVRVFNRHGVDKDERALAIEREEIERLAKDRDDEQAILDRNVYNRLAELLEGRQGIAGPKGFKKDTKITRAVLEEYPKSQWWLFASPNDKLMAEIEAMRKQYDESKKGLEQRFLDKVEKLQRGDELPPGVMKMVKVFVAVKRKIQPGDKMAGRHGNKGVVSKIVPIEDMPFLEDGTHADIVLNPLGVPSRMNVGQILETHLGWACAGLGKRIGQTVDAYLSKQDIKPLKETLKKVYGEDETIKSLNDNELIELGHNLSRGVPIATPVFDGAKEADIEEMLKLAGLDASGQSTVYDGRTGDPFDRKVTVGYIYMLKLHHLVDDKIHARSIGPYSLVTQQPLGGKAQFGGQRFGEMEVWALEAYGAAYTLQEMLTVKSDDVAGRTKVYEAIVRGDDTFEAGIPESFNVLVKEMRSLGLNVDLHNSKMGPAPTSEAAE</sequence>
<organism>
    <name type="scientific">Bradyrhizobium diazoefficiens (strain JCM 10833 / BCRC 13528 / IAM 13628 / NBRC 14792 / USDA 110)</name>
    <dbReference type="NCBI Taxonomy" id="224911"/>
    <lineage>
        <taxon>Bacteria</taxon>
        <taxon>Pseudomonadati</taxon>
        <taxon>Pseudomonadota</taxon>
        <taxon>Alphaproteobacteria</taxon>
        <taxon>Hyphomicrobiales</taxon>
        <taxon>Nitrobacteraceae</taxon>
        <taxon>Bradyrhizobium</taxon>
    </lineage>
</organism>
<name>RPOB_BRADU</name>
<gene>
    <name evidence="1" type="primary">rpoB</name>
    <name type="ordered locus">bll5410</name>
</gene>